<organism>
    <name type="scientific">Listeria monocytogenes serotype 4a (strain HCC23)</name>
    <dbReference type="NCBI Taxonomy" id="552536"/>
    <lineage>
        <taxon>Bacteria</taxon>
        <taxon>Bacillati</taxon>
        <taxon>Bacillota</taxon>
        <taxon>Bacilli</taxon>
        <taxon>Bacillales</taxon>
        <taxon>Listeriaceae</taxon>
        <taxon>Listeria</taxon>
    </lineage>
</organism>
<comment type="function">
    <text evidence="1">Carrier of the growing fatty acid chain in fatty acid biosynthesis.</text>
</comment>
<comment type="pathway">
    <text evidence="1">Lipid metabolism; fatty acid biosynthesis.</text>
</comment>
<comment type="subcellular location">
    <subcellularLocation>
        <location evidence="1">Cytoplasm</location>
    </subcellularLocation>
</comment>
<comment type="PTM">
    <text evidence="1">4'-phosphopantetheine is transferred from CoA to a specific serine of apo-ACP by AcpS. This modification is essential for activity because fatty acids are bound in thioester linkage to the sulfhydryl of the prosthetic group.</text>
</comment>
<comment type="similarity">
    <text evidence="1">Belongs to the acyl carrier protein (ACP) family.</text>
</comment>
<protein>
    <recommendedName>
        <fullName evidence="1">Acyl carrier protein</fullName>
        <shortName evidence="1">ACP</shortName>
    </recommendedName>
</protein>
<dbReference type="EMBL" id="CP001175">
    <property type="protein sequence ID" value="ACK39105.1"/>
    <property type="molecule type" value="Genomic_DNA"/>
</dbReference>
<dbReference type="RefSeq" id="WP_003723866.1">
    <property type="nucleotide sequence ID" value="NC_011660.1"/>
</dbReference>
<dbReference type="SMR" id="B8DDU6"/>
<dbReference type="KEGG" id="lmh:LMHCC_0751"/>
<dbReference type="HOGENOM" id="CLU_108696_5_3_9"/>
<dbReference type="UniPathway" id="UPA00094"/>
<dbReference type="GO" id="GO:0005829">
    <property type="term" value="C:cytosol"/>
    <property type="evidence" value="ECO:0007669"/>
    <property type="project" value="TreeGrafter"/>
</dbReference>
<dbReference type="GO" id="GO:0016020">
    <property type="term" value="C:membrane"/>
    <property type="evidence" value="ECO:0007669"/>
    <property type="project" value="GOC"/>
</dbReference>
<dbReference type="GO" id="GO:0000035">
    <property type="term" value="F:acyl binding"/>
    <property type="evidence" value="ECO:0007669"/>
    <property type="project" value="TreeGrafter"/>
</dbReference>
<dbReference type="GO" id="GO:0000036">
    <property type="term" value="F:acyl carrier activity"/>
    <property type="evidence" value="ECO:0007669"/>
    <property type="project" value="UniProtKB-UniRule"/>
</dbReference>
<dbReference type="GO" id="GO:0009245">
    <property type="term" value="P:lipid A biosynthetic process"/>
    <property type="evidence" value="ECO:0007669"/>
    <property type="project" value="TreeGrafter"/>
</dbReference>
<dbReference type="FunFam" id="1.10.1200.10:FF:000001">
    <property type="entry name" value="Acyl carrier protein"/>
    <property type="match status" value="1"/>
</dbReference>
<dbReference type="Gene3D" id="1.10.1200.10">
    <property type="entry name" value="ACP-like"/>
    <property type="match status" value="1"/>
</dbReference>
<dbReference type="HAMAP" id="MF_01217">
    <property type="entry name" value="Acyl_carrier"/>
    <property type="match status" value="1"/>
</dbReference>
<dbReference type="InterPro" id="IPR003231">
    <property type="entry name" value="ACP"/>
</dbReference>
<dbReference type="InterPro" id="IPR036736">
    <property type="entry name" value="ACP-like_sf"/>
</dbReference>
<dbReference type="InterPro" id="IPR009081">
    <property type="entry name" value="PP-bd_ACP"/>
</dbReference>
<dbReference type="InterPro" id="IPR006162">
    <property type="entry name" value="Ppantetheine_attach_site"/>
</dbReference>
<dbReference type="NCBIfam" id="TIGR00517">
    <property type="entry name" value="acyl_carrier"/>
    <property type="match status" value="1"/>
</dbReference>
<dbReference type="NCBIfam" id="NF002148">
    <property type="entry name" value="PRK00982.1-2"/>
    <property type="match status" value="1"/>
</dbReference>
<dbReference type="NCBIfam" id="NF002150">
    <property type="entry name" value="PRK00982.1-4"/>
    <property type="match status" value="1"/>
</dbReference>
<dbReference type="NCBIfam" id="NF002151">
    <property type="entry name" value="PRK00982.1-5"/>
    <property type="match status" value="1"/>
</dbReference>
<dbReference type="PANTHER" id="PTHR20863">
    <property type="entry name" value="ACYL CARRIER PROTEIN"/>
    <property type="match status" value="1"/>
</dbReference>
<dbReference type="PANTHER" id="PTHR20863:SF76">
    <property type="entry name" value="CARRIER DOMAIN-CONTAINING PROTEIN"/>
    <property type="match status" value="1"/>
</dbReference>
<dbReference type="Pfam" id="PF00550">
    <property type="entry name" value="PP-binding"/>
    <property type="match status" value="1"/>
</dbReference>
<dbReference type="SUPFAM" id="SSF47336">
    <property type="entry name" value="ACP-like"/>
    <property type="match status" value="1"/>
</dbReference>
<dbReference type="PROSITE" id="PS50075">
    <property type="entry name" value="CARRIER"/>
    <property type="match status" value="1"/>
</dbReference>
<dbReference type="PROSITE" id="PS00012">
    <property type="entry name" value="PHOSPHOPANTETHEINE"/>
    <property type="match status" value="1"/>
</dbReference>
<proteinExistence type="inferred from homology"/>
<feature type="chain" id="PRO_1000164791" description="Acyl carrier protein">
    <location>
        <begin position="1"/>
        <end position="77"/>
    </location>
</feature>
<feature type="domain" description="Carrier" evidence="2">
    <location>
        <begin position="2"/>
        <end position="77"/>
    </location>
</feature>
<feature type="modified residue" description="O-(pantetheine 4'-phosphoryl)serine" evidence="2">
    <location>
        <position position="37"/>
    </location>
</feature>
<gene>
    <name evidence="1" type="primary">acpP</name>
    <name type="ordered locus">LMHCC_0751</name>
</gene>
<reference key="1">
    <citation type="journal article" date="2011" name="J. Bacteriol.">
        <title>Genome sequence of lineage III Listeria monocytogenes strain HCC23.</title>
        <authorList>
            <person name="Steele C.L."/>
            <person name="Donaldson J.R."/>
            <person name="Paul D."/>
            <person name="Banes M.M."/>
            <person name="Arick T."/>
            <person name="Bridges S.M."/>
            <person name="Lawrence M.L."/>
        </authorList>
    </citation>
    <scope>NUCLEOTIDE SEQUENCE [LARGE SCALE GENOMIC DNA]</scope>
    <source>
        <strain>HCC23</strain>
    </source>
</reference>
<accession>B8DDU6</accession>
<keyword id="KW-0963">Cytoplasm</keyword>
<keyword id="KW-0275">Fatty acid biosynthesis</keyword>
<keyword id="KW-0276">Fatty acid metabolism</keyword>
<keyword id="KW-0444">Lipid biosynthesis</keyword>
<keyword id="KW-0443">Lipid metabolism</keyword>
<keyword id="KW-0596">Phosphopantetheine</keyword>
<keyword id="KW-0597">Phosphoprotein</keyword>
<name>ACP_LISMH</name>
<evidence type="ECO:0000255" key="1">
    <source>
        <dbReference type="HAMAP-Rule" id="MF_01217"/>
    </source>
</evidence>
<evidence type="ECO:0000255" key="2">
    <source>
        <dbReference type="PROSITE-ProRule" id="PRU00258"/>
    </source>
</evidence>
<sequence>MAEVLEKVTKIIVDRLGVEESKVTLEASFKEDLGADSLDVVELVMELEDEFGVEISDGDAENINTVGDAVKYIEANA</sequence>